<protein>
    <recommendedName>
        <fullName evidence="1">Uridylate kinase</fullName>
        <shortName evidence="1">UK</shortName>
        <ecNumber evidence="1">2.7.4.22</ecNumber>
    </recommendedName>
    <alternativeName>
        <fullName evidence="1">Uridine monophosphate kinase</fullName>
        <shortName evidence="1">UMP kinase</shortName>
        <shortName evidence="1">UMPK</shortName>
    </alternativeName>
</protein>
<proteinExistence type="inferred from homology"/>
<evidence type="ECO:0000255" key="1">
    <source>
        <dbReference type="HAMAP-Rule" id="MF_01220"/>
    </source>
</evidence>
<keyword id="KW-0021">Allosteric enzyme</keyword>
<keyword id="KW-0067">ATP-binding</keyword>
<keyword id="KW-0963">Cytoplasm</keyword>
<keyword id="KW-0418">Kinase</keyword>
<keyword id="KW-0547">Nucleotide-binding</keyword>
<keyword id="KW-0665">Pyrimidine biosynthesis</keyword>
<keyword id="KW-0808">Transferase</keyword>
<name>PYRH_ECOL5</name>
<dbReference type="EC" id="2.7.4.22" evidence="1"/>
<dbReference type="EMBL" id="CP000247">
    <property type="protein sequence ID" value="ABG68219.1"/>
    <property type="molecule type" value="Genomic_DNA"/>
</dbReference>
<dbReference type="RefSeq" id="WP_000224573.1">
    <property type="nucleotide sequence ID" value="NC_008253.1"/>
</dbReference>
<dbReference type="SMR" id="Q0TLG2"/>
<dbReference type="GeneID" id="93777254"/>
<dbReference type="KEGG" id="ecp:ECP_0179"/>
<dbReference type="HOGENOM" id="CLU_033861_0_0_6"/>
<dbReference type="UniPathway" id="UPA00159">
    <property type="reaction ID" value="UER00275"/>
</dbReference>
<dbReference type="Proteomes" id="UP000009182">
    <property type="component" value="Chromosome"/>
</dbReference>
<dbReference type="GO" id="GO:0005829">
    <property type="term" value="C:cytosol"/>
    <property type="evidence" value="ECO:0007669"/>
    <property type="project" value="TreeGrafter"/>
</dbReference>
<dbReference type="GO" id="GO:0005524">
    <property type="term" value="F:ATP binding"/>
    <property type="evidence" value="ECO:0007669"/>
    <property type="project" value="UniProtKB-KW"/>
</dbReference>
<dbReference type="GO" id="GO:0033862">
    <property type="term" value="F:UMP kinase activity"/>
    <property type="evidence" value="ECO:0007669"/>
    <property type="project" value="UniProtKB-EC"/>
</dbReference>
<dbReference type="GO" id="GO:0044210">
    <property type="term" value="P:'de novo' CTP biosynthetic process"/>
    <property type="evidence" value="ECO:0007669"/>
    <property type="project" value="UniProtKB-UniRule"/>
</dbReference>
<dbReference type="GO" id="GO:0006225">
    <property type="term" value="P:UDP biosynthetic process"/>
    <property type="evidence" value="ECO:0007669"/>
    <property type="project" value="TreeGrafter"/>
</dbReference>
<dbReference type="CDD" id="cd04254">
    <property type="entry name" value="AAK_UMPK-PyrH-Ec"/>
    <property type="match status" value="1"/>
</dbReference>
<dbReference type="FunFam" id="3.40.1160.10:FF:000001">
    <property type="entry name" value="Uridylate kinase"/>
    <property type="match status" value="1"/>
</dbReference>
<dbReference type="Gene3D" id="3.40.1160.10">
    <property type="entry name" value="Acetylglutamate kinase-like"/>
    <property type="match status" value="1"/>
</dbReference>
<dbReference type="HAMAP" id="MF_01220_B">
    <property type="entry name" value="PyrH_B"/>
    <property type="match status" value="1"/>
</dbReference>
<dbReference type="InterPro" id="IPR036393">
    <property type="entry name" value="AceGlu_kinase-like_sf"/>
</dbReference>
<dbReference type="InterPro" id="IPR001048">
    <property type="entry name" value="Asp/Glu/Uridylate_kinase"/>
</dbReference>
<dbReference type="InterPro" id="IPR011817">
    <property type="entry name" value="Uridylate_kinase"/>
</dbReference>
<dbReference type="InterPro" id="IPR015963">
    <property type="entry name" value="Uridylate_kinase_bac"/>
</dbReference>
<dbReference type="NCBIfam" id="TIGR02075">
    <property type="entry name" value="pyrH_bact"/>
    <property type="match status" value="1"/>
</dbReference>
<dbReference type="PANTHER" id="PTHR42833">
    <property type="entry name" value="URIDYLATE KINASE"/>
    <property type="match status" value="1"/>
</dbReference>
<dbReference type="PANTHER" id="PTHR42833:SF4">
    <property type="entry name" value="URIDYLATE KINASE PUMPKIN, CHLOROPLASTIC"/>
    <property type="match status" value="1"/>
</dbReference>
<dbReference type="Pfam" id="PF00696">
    <property type="entry name" value="AA_kinase"/>
    <property type="match status" value="1"/>
</dbReference>
<dbReference type="PIRSF" id="PIRSF005650">
    <property type="entry name" value="Uridylate_kin"/>
    <property type="match status" value="1"/>
</dbReference>
<dbReference type="SUPFAM" id="SSF53633">
    <property type="entry name" value="Carbamate kinase-like"/>
    <property type="match status" value="1"/>
</dbReference>
<organism>
    <name type="scientific">Escherichia coli O6:K15:H31 (strain 536 / UPEC)</name>
    <dbReference type="NCBI Taxonomy" id="362663"/>
    <lineage>
        <taxon>Bacteria</taxon>
        <taxon>Pseudomonadati</taxon>
        <taxon>Pseudomonadota</taxon>
        <taxon>Gammaproteobacteria</taxon>
        <taxon>Enterobacterales</taxon>
        <taxon>Enterobacteriaceae</taxon>
        <taxon>Escherichia</taxon>
    </lineage>
</organism>
<gene>
    <name evidence="1" type="primary">pyrH</name>
    <name type="ordered locus">ECP_0179</name>
</gene>
<comment type="function">
    <text evidence="1">Catalyzes the reversible phosphorylation of UMP to UDP.</text>
</comment>
<comment type="catalytic activity">
    <reaction evidence="1">
        <text>UMP + ATP = UDP + ADP</text>
        <dbReference type="Rhea" id="RHEA:24400"/>
        <dbReference type="ChEBI" id="CHEBI:30616"/>
        <dbReference type="ChEBI" id="CHEBI:57865"/>
        <dbReference type="ChEBI" id="CHEBI:58223"/>
        <dbReference type="ChEBI" id="CHEBI:456216"/>
        <dbReference type="EC" id="2.7.4.22"/>
    </reaction>
</comment>
<comment type="activity regulation">
    <text evidence="1">Allosterically activated by GTP. Inhibited by UTP.</text>
</comment>
<comment type="pathway">
    <text evidence="1">Pyrimidine metabolism; CTP biosynthesis via de novo pathway; UDP from UMP (UMPK route): step 1/1.</text>
</comment>
<comment type="subunit">
    <text evidence="1">Homohexamer.</text>
</comment>
<comment type="subcellular location">
    <subcellularLocation>
        <location evidence="1">Cytoplasm</location>
    </subcellularLocation>
</comment>
<comment type="similarity">
    <text evidence="1">Belongs to the UMP kinase family.</text>
</comment>
<sequence>MATNAKPVYKRILLKLSGEALQGTEGFGIDASILDRMAQEIKELVELGIQVGVVIGGGNLFRGAGLAKAGMNRVVGDHMGMLATVMNGLAMRDALHRAYVNARLMSAIPLNGVCDSYSWAEAISLLRNNRVVILSAGTGNPFFTTDSAACLRGIEIEADVVLKATKVDGVFTADPAKDPTATMYEQLTYSEVLEKELKVMDLAAFTLARDHKLPIRVFNMNKPGALRRVVMGEKEGTLITE</sequence>
<accession>Q0TLG2</accession>
<reference key="1">
    <citation type="journal article" date="2006" name="Mol. Microbiol.">
        <title>Role of pathogenicity island-associated integrases in the genome plasticity of uropathogenic Escherichia coli strain 536.</title>
        <authorList>
            <person name="Hochhut B."/>
            <person name="Wilde C."/>
            <person name="Balling G."/>
            <person name="Middendorf B."/>
            <person name="Dobrindt U."/>
            <person name="Brzuszkiewicz E."/>
            <person name="Gottschalk G."/>
            <person name="Carniel E."/>
            <person name="Hacker J."/>
        </authorList>
    </citation>
    <scope>NUCLEOTIDE SEQUENCE [LARGE SCALE GENOMIC DNA]</scope>
    <source>
        <strain>536 / UPEC</strain>
    </source>
</reference>
<feature type="chain" id="PRO_1000053922" description="Uridylate kinase">
    <location>
        <begin position="1"/>
        <end position="241"/>
    </location>
</feature>
<feature type="region of interest" description="Involved in allosteric activation by GTP" evidence="1">
    <location>
        <begin position="23"/>
        <end position="28"/>
    </location>
</feature>
<feature type="binding site" evidence="1">
    <location>
        <begin position="15"/>
        <end position="18"/>
    </location>
    <ligand>
        <name>ATP</name>
        <dbReference type="ChEBI" id="CHEBI:30616"/>
    </ligand>
</feature>
<feature type="binding site" evidence="1">
    <location>
        <position position="57"/>
    </location>
    <ligand>
        <name>UMP</name>
        <dbReference type="ChEBI" id="CHEBI:57865"/>
    </ligand>
</feature>
<feature type="binding site" evidence="1">
    <location>
        <position position="58"/>
    </location>
    <ligand>
        <name>ATP</name>
        <dbReference type="ChEBI" id="CHEBI:30616"/>
    </ligand>
</feature>
<feature type="binding site" evidence="1">
    <location>
        <position position="62"/>
    </location>
    <ligand>
        <name>ATP</name>
        <dbReference type="ChEBI" id="CHEBI:30616"/>
    </ligand>
</feature>
<feature type="binding site" evidence="1">
    <location>
        <position position="77"/>
    </location>
    <ligand>
        <name>UMP</name>
        <dbReference type="ChEBI" id="CHEBI:57865"/>
    </ligand>
</feature>
<feature type="binding site" evidence="1">
    <location>
        <begin position="138"/>
        <end position="145"/>
    </location>
    <ligand>
        <name>UMP</name>
        <dbReference type="ChEBI" id="CHEBI:57865"/>
    </ligand>
</feature>
<feature type="binding site" evidence="1">
    <location>
        <position position="165"/>
    </location>
    <ligand>
        <name>ATP</name>
        <dbReference type="ChEBI" id="CHEBI:30616"/>
    </ligand>
</feature>
<feature type="binding site" evidence="1">
    <location>
        <position position="171"/>
    </location>
    <ligand>
        <name>ATP</name>
        <dbReference type="ChEBI" id="CHEBI:30616"/>
    </ligand>
</feature>
<feature type="binding site" evidence="1">
    <location>
        <position position="174"/>
    </location>
    <ligand>
        <name>ATP</name>
        <dbReference type="ChEBI" id="CHEBI:30616"/>
    </ligand>
</feature>